<organism>
    <name type="scientific">Helicobacter pylori (strain ATCC 700392 / 26695)</name>
    <name type="common">Campylobacter pylori</name>
    <dbReference type="NCBI Taxonomy" id="85962"/>
    <lineage>
        <taxon>Bacteria</taxon>
        <taxon>Pseudomonadati</taxon>
        <taxon>Campylobacterota</taxon>
        <taxon>Epsilonproteobacteria</taxon>
        <taxon>Campylobacterales</taxon>
        <taxon>Helicobacteraceae</taxon>
        <taxon>Helicobacter</taxon>
    </lineage>
</organism>
<gene>
    <name evidence="1" type="primary">rplW</name>
    <name type="ordered locus">HP_1317</name>
</gene>
<sequence>MADIMDIKSILYTEKSLGLQEKGVLVVQTAQNVTKNQLKEVFKTYFGFEPLKINSLKQEGKVKRFRGKLGQRKSFKKFYVKVPEGASIAALGA</sequence>
<proteinExistence type="inferred from homology"/>
<comment type="function">
    <text evidence="1">One of the early assembly proteins it binds 23S rRNA. One of the proteins that surrounds the polypeptide exit tunnel on the outside of the ribosome. Forms the main docking site for trigger factor binding to the ribosome.</text>
</comment>
<comment type="subunit">
    <text evidence="1">Part of the 50S ribosomal subunit. Contacts protein L29, and trigger factor when it is bound to the ribosome.</text>
</comment>
<comment type="similarity">
    <text evidence="1">Belongs to the universal ribosomal protein uL23 family.</text>
</comment>
<feature type="chain" id="PRO_0000129411" description="Large ribosomal subunit protein uL23">
    <location>
        <begin position="1"/>
        <end position="93"/>
    </location>
</feature>
<evidence type="ECO:0000255" key="1">
    <source>
        <dbReference type="HAMAP-Rule" id="MF_01369"/>
    </source>
</evidence>
<evidence type="ECO:0000305" key="2"/>
<accession>P66119</accession>
<accession>P56048</accession>
<protein>
    <recommendedName>
        <fullName evidence="1">Large ribosomal subunit protein uL23</fullName>
    </recommendedName>
    <alternativeName>
        <fullName evidence="2">50S ribosomal protein L23</fullName>
    </alternativeName>
</protein>
<name>RL23_HELPY</name>
<reference key="1">
    <citation type="journal article" date="1997" name="Nature">
        <title>The complete genome sequence of the gastric pathogen Helicobacter pylori.</title>
        <authorList>
            <person name="Tomb J.-F."/>
            <person name="White O."/>
            <person name="Kerlavage A.R."/>
            <person name="Clayton R.A."/>
            <person name="Sutton G.G."/>
            <person name="Fleischmann R.D."/>
            <person name="Ketchum K.A."/>
            <person name="Klenk H.-P."/>
            <person name="Gill S.R."/>
            <person name="Dougherty B.A."/>
            <person name="Nelson K.E."/>
            <person name="Quackenbush J."/>
            <person name="Zhou L."/>
            <person name="Kirkness E.F."/>
            <person name="Peterson S.N."/>
            <person name="Loftus B.J."/>
            <person name="Richardson D.L."/>
            <person name="Dodson R.J."/>
            <person name="Khalak H.G."/>
            <person name="Glodek A."/>
            <person name="McKenney K."/>
            <person name="FitzGerald L.M."/>
            <person name="Lee N."/>
            <person name="Adams M.D."/>
            <person name="Hickey E.K."/>
            <person name="Berg D.E."/>
            <person name="Gocayne J.D."/>
            <person name="Utterback T.R."/>
            <person name="Peterson J.D."/>
            <person name="Kelley J.M."/>
            <person name="Cotton M.D."/>
            <person name="Weidman J.F."/>
            <person name="Fujii C."/>
            <person name="Bowman C."/>
            <person name="Watthey L."/>
            <person name="Wallin E."/>
            <person name="Hayes W.S."/>
            <person name="Borodovsky M."/>
            <person name="Karp P.D."/>
            <person name="Smith H.O."/>
            <person name="Fraser C.M."/>
            <person name="Venter J.C."/>
        </authorList>
    </citation>
    <scope>NUCLEOTIDE SEQUENCE [LARGE SCALE GENOMIC DNA]</scope>
    <source>
        <strain>ATCC 700392 / 26695</strain>
    </source>
</reference>
<keyword id="KW-1185">Reference proteome</keyword>
<keyword id="KW-0687">Ribonucleoprotein</keyword>
<keyword id="KW-0689">Ribosomal protein</keyword>
<keyword id="KW-0694">RNA-binding</keyword>
<keyword id="KW-0699">rRNA-binding</keyword>
<dbReference type="EMBL" id="AE000511">
    <property type="protein sequence ID" value="AAD08356.1"/>
    <property type="molecule type" value="Genomic_DNA"/>
</dbReference>
<dbReference type="PIR" id="E64684">
    <property type="entry name" value="E64684"/>
</dbReference>
<dbReference type="RefSeq" id="NP_208109.1">
    <property type="nucleotide sequence ID" value="NC_000915.1"/>
</dbReference>
<dbReference type="RefSeq" id="WP_000763613.1">
    <property type="nucleotide sequence ID" value="NC_018939.1"/>
</dbReference>
<dbReference type="SMR" id="P66119"/>
<dbReference type="FunCoup" id="P66119">
    <property type="interactions" value="367"/>
</dbReference>
<dbReference type="IntAct" id="P66119">
    <property type="interactions" value="2"/>
</dbReference>
<dbReference type="STRING" id="85962.HP_1317"/>
<dbReference type="PaxDb" id="85962-C694_06800"/>
<dbReference type="EnsemblBacteria" id="AAD08356">
    <property type="protein sequence ID" value="AAD08356"/>
    <property type="gene ID" value="HP_1317"/>
</dbReference>
<dbReference type="KEGG" id="heo:C694_06800"/>
<dbReference type="KEGG" id="hpy:HP_1317"/>
<dbReference type="PATRIC" id="fig|85962.47.peg.1411"/>
<dbReference type="eggNOG" id="COG0089">
    <property type="taxonomic scope" value="Bacteria"/>
</dbReference>
<dbReference type="InParanoid" id="P66119"/>
<dbReference type="OrthoDB" id="5339807at2"/>
<dbReference type="PhylomeDB" id="P66119"/>
<dbReference type="Proteomes" id="UP000000429">
    <property type="component" value="Chromosome"/>
</dbReference>
<dbReference type="GO" id="GO:1990904">
    <property type="term" value="C:ribonucleoprotein complex"/>
    <property type="evidence" value="ECO:0007669"/>
    <property type="project" value="UniProtKB-KW"/>
</dbReference>
<dbReference type="GO" id="GO:0005840">
    <property type="term" value="C:ribosome"/>
    <property type="evidence" value="ECO:0007669"/>
    <property type="project" value="UniProtKB-KW"/>
</dbReference>
<dbReference type="GO" id="GO:0019843">
    <property type="term" value="F:rRNA binding"/>
    <property type="evidence" value="ECO:0007669"/>
    <property type="project" value="UniProtKB-UniRule"/>
</dbReference>
<dbReference type="GO" id="GO:0003735">
    <property type="term" value="F:structural constituent of ribosome"/>
    <property type="evidence" value="ECO:0007669"/>
    <property type="project" value="InterPro"/>
</dbReference>
<dbReference type="GO" id="GO:0006412">
    <property type="term" value="P:translation"/>
    <property type="evidence" value="ECO:0007669"/>
    <property type="project" value="UniProtKB-UniRule"/>
</dbReference>
<dbReference type="Gene3D" id="3.30.70.330">
    <property type="match status" value="1"/>
</dbReference>
<dbReference type="HAMAP" id="MF_01369_B">
    <property type="entry name" value="Ribosomal_uL23_B"/>
    <property type="match status" value="1"/>
</dbReference>
<dbReference type="InterPro" id="IPR012677">
    <property type="entry name" value="Nucleotide-bd_a/b_plait_sf"/>
</dbReference>
<dbReference type="InterPro" id="IPR013025">
    <property type="entry name" value="Ribosomal_uL23-like"/>
</dbReference>
<dbReference type="InterPro" id="IPR012678">
    <property type="entry name" value="Ribosomal_uL23/eL15/eS24_sf"/>
</dbReference>
<dbReference type="NCBIfam" id="NF004362">
    <property type="entry name" value="PRK05738.2-2"/>
    <property type="match status" value="1"/>
</dbReference>
<dbReference type="Pfam" id="PF00276">
    <property type="entry name" value="Ribosomal_L23"/>
    <property type="match status" value="1"/>
</dbReference>
<dbReference type="SUPFAM" id="SSF54189">
    <property type="entry name" value="Ribosomal proteins S24e, L23 and L15e"/>
    <property type="match status" value="1"/>
</dbReference>